<name>GP13_BPMU</name>
<proteinExistence type="evidence at transcript level"/>
<accession>Q38490</accession>
<comment type="subcellular location">
    <subcellularLocation>
        <location evidence="2">Host cytoplasm</location>
    </subcellularLocation>
</comment>
<comment type="induction">
    <text evidence="1">Expressed in the early phase of the viral replicative cycle. Expression of early genes is repressed by viral Repc (latency) and favored by viral Ner protein.</text>
</comment>
<gene>
    <name type="ordered locus">Mup13</name>
</gene>
<organism>
    <name type="scientific">Escherichia phage Mu</name>
    <name type="common">Bacteriophage Mu</name>
    <dbReference type="NCBI Taxonomy" id="2681603"/>
    <lineage>
        <taxon>Viruses</taxon>
        <taxon>Duplodnaviria</taxon>
        <taxon>Heunggongvirae</taxon>
        <taxon>Uroviricota</taxon>
        <taxon>Caudoviricetes</taxon>
        <taxon>Muvirus</taxon>
        <taxon>Muvirus mu</taxon>
    </lineage>
</organism>
<protein>
    <recommendedName>
        <fullName>Uncharacterized protein gp13</fullName>
    </recommendedName>
    <alternativeName>
        <fullName>E14</fullName>
    </alternativeName>
    <alternativeName>
        <fullName>Gene product 13</fullName>
        <shortName>gp13</shortName>
    </alternativeName>
</protein>
<sequence>MENNKTSYSWLGKFTTVKQECPTCGNESPEYLKECPHCGGLKCNHCDMGDDTACMNCEGE</sequence>
<dbReference type="EMBL" id="M64097">
    <property type="protein sequence ID" value="AAA32402.1"/>
    <property type="molecule type" value="Genomic_DNA"/>
</dbReference>
<dbReference type="EMBL" id="AF083977">
    <property type="protein sequence ID" value="AAF01090.1"/>
    <property type="molecule type" value="Genomic_DNA"/>
</dbReference>
<dbReference type="RefSeq" id="NP_050617.1">
    <property type="nucleotide sequence ID" value="NC_000929.1"/>
</dbReference>
<dbReference type="SMR" id="Q38490"/>
<dbReference type="GeneID" id="2636290"/>
<dbReference type="KEGG" id="vg:2636290"/>
<dbReference type="Proteomes" id="UP000002611">
    <property type="component" value="Genome"/>
</dbReference>
<dbReference type="Proteomes" id="UP000401936">
    <property type="component" value="Segment"/>
</dbReference>
<dbReference type="GO" id="GO:0030430">
    <property type="term" value="C:host cell cytoplasm"/>
    <property type="evidence" value="ECO:0007669"/>
    <property type="project" value="UniProtKB-SubCell"/>
</dbReference>
<reference key="1">
    <citation type="book" date="1987" name="Phage Mu">
        <title>Sequence of the left end of Mu.</title>
        <editorList>
            <person name="Symonds N."/>
            <person name="Toussaint A."/>
            <person name="van de Putte P."/>
            <person name="Howe M.M."/>
        </editorList>
        <authorList>
            <person name="Priess H."/>
            <person name="Brauer B."/>
            <person name="Schmidt C."/>
            <person name="Kamp D."/>
        </authorList>
    </citation>
    <scope>NUCLEOTIDE SEQUENCE [GENOMIC DNA]</scope>
</reference>
<reference key="2">
    <citation type="journal article" date="2002" name="J. Mol. Biol.">
        <title>Bacteriophage Mu genome sequence: analysis and comparison with Mu-like prophages in Haemophilus, Neisseria and Deinococcus.</title>
        <authorList>
            <person name="Morgan G.J."/>
            <person name="Hatfull G.F."/>
            <person name="Casjens S."/>
            <person name="Hendrix R.W."/>
        </authorList>
    </citation>
    <scope>NUCLEOTIDE SEQUENCE [LARGE SCALE GENOMIC DNA]</scope>
</reference>
<reference key="3">
    <citation type="journal article" date="1989" name="J. Bacteriol.">
        <title>Localization and regulation of bacteriophage Mu promoters.</title>
        <authorList>
            <person name="Stoddard S.F."/>
            <person name="Howe M.M."/>
        </authorList>
    </citation>
    <scope>INDUCTION</scope>
</reference>
<keyword id="KW-0244">Early protein</keyword>
<keyword id="KW-1035">Host cytoplasm</keyword>
<keyword id="KW-1185">Reference proteome</keyword>
<organismHost>
    <name type="scientific">Enterobacteriaceae</name>
    <dbReference type="NCBI Taxonomy" id="543"/>
</organismHost>
<feature type="chain" id="PRO_0000077808" description="Uncharacterized protein gp13">
    <location>
        <begin position="1"/>
        <end position="60"/>
    </location>
</feature>
<evidence type="ECO:0000269" key="1">
    <source>
    </source>
</evidence>
<evidence type="ECO:0000305" key="2"/>